<organism>
    <name type="scientific">Ensete ventricosum</name>
    <name type="common">Abyssinian banana</name>
    <name type="synonym">Musa ensete</name>
    <dbReference type="NCBI Taxonomy" id="4639"/>
    <lineage>
        <taxon>Eukaryota</taxon>
        <taxon>Viridiplantae</taxon>
        <taxon>Streptophyta</taxon>
        <taxon>Embryophyta</taxon>
        <taxon>Tracheophyta</taxon>
        <taxon>Spermatophyta</taxon>
        <taxon>Magnoliopsida</taxon>
        <taxon>Liliopsida</taxon>
        <taxon>Zingiberales</taxon>
        <taxon>Musaceae</taxon>
        <taxon>Ensete</taxon>
    </lineage>
</organism>
<reference key="1">
    <citation type="submission" date="2002-09" db="EMBL/GenBank/DDBJ databases">
        <title>Phylogenetic relationships among the major lineages of Asparagales based on a large chloroplast data set.</title>
        <authorList>
            <person name="McPherson M.A."/>
            <person name="Rai H.S."/>
            <person name="Wong W.A."/>
            <person name="Graham S.W."/>
        </authorList>
    </citation>
    <scope>NUCLEOTIDE SEQUENCE [GENOMIC DNA]</scope>
</reference>
<keyword id="KW-0150">Chloroplast</keyword>
<keyword id="KW-0472">Membrane</keyword>
<keyword id="KW-0520">NAD</keyword>
<keyword id="KW-0521">NADP</keyword>
<keyword id="KW-0934">Plastid</keyword>
<keyword id="KW-0618">Plastoquinone</keyword>
<keyword id="KW-0874">Quinone</keyword>
<keyword id="KW-0793">Thylakoid</keyword>
<keyword id="KW-1278">Translocase</keyword>
<keyword id="KW-0812">Transmembrane</keyword>
<keyword id="KW-1133">Transmembrane helix</keyword>
<keyword id="KW-0813">Transport</keyword>
<geneLocation type="chloroplast"/>
<accession>Q67IK8</accession>
<evidence type="ECO:0000255" key="1">
    <source>
        <dbReference type="HAMAP-Rule" id="MF_00445"/>
    </source>
</evidence>
<evidence type="ECO:0000305" key="2"/>
<dbReference type="EC" id="7.1.1.-" evidence="1"/>
<dbReference type="EMBL" id="AY147461">
    <property type="protein sequence ID" value="AAN31995.1"/>
    <property type="status" value="ALT_INIT"/>
    <property type="molecule type" value="Genomic_DNA"/>
</dbReference>
<dbReference type="RefSeq" id="YP_010219341.1">
    <property type="nucleotide sequence ID" value="NC_058926.1"/>
</dbReference>
<dbReference type="RefSeq" id="YP_010219360.1">
    <property type="nucleotide sequence ID" value="NC_058926.1"/>
</dbReference>
<dbReference type="SMR" id="Q67IK8"/>
<dbReference type="GeneID" id="68666228"/>
<dbReference type="GeneID" id="68666266"/>
<dbReference type="GO" id="GO:0009535">
    <property type="term" value="C:chloroplast thylakoid membrane"/>
    <property type="evidence" value="ECO:0007669"/>
    <property type="project" value="UniProtKB-SubCell"/>
</dbReference>
<dbReference type="GO" id="GO:0008137">
    <property type="term" value="F:NADH dehydrogenase (ubiquinone) activity"/>
    <property type="evidence" value="ECO:0007669"/>
    <property type="project" value="InterPro"/>
</dbReference>
<dbReference type="GO" id="GO:0048038">
    <property type="term" value="F:quinone binding"/>
    <property type="evidence" value="ECO:0007669"/>
    <property type="project" value="UniProtKB-KW"/>
</dbReference>
<dbReference type="GO" id="GO:0042773">
    <property type="term" value="P:ATP synthesis coupled electron transport"/>
    <property type="evidence" value="ECO:0007669"/>
    <property type="project" value="InterPro"/>
</dbReference>
<dbReference type="GO" id="GO:0019684">
    <property type="term" value="P:photosynthesis, light reaction"/>
    <property type="evidence" value="ECO:0007669"/>
    <property type="project" value="UniProtKB-UniRule"/>
</dbReference>
<dbReference type="HAMAP" id="MF_00445">
    <property type="entry name" value="NDH1_NuoN_1"/>
    <property type="match status" value="1"/>
</dbReference>
<dbReference type="InterPro" id="IPR010096">
    <property type="entry name" value="NADH-Q_OxRdtase_suN/2"/>
</dbReference>
<dbReference type="InterPro" id="IPR001750">
    <property type="entry name" value="ND/Mrp_TM"/>
</dbReference>
<dbReference type="InterPro" id="IPR045693">
    <property type="entry name" value="Ndh2_N"/>
</dbReference>
<dbReference type="NCBIfam" id="TIGR01770">
    <property type="entry name" value="NDH_I_N"/>
    <property type="match status" value="1"/>
</dbReference>
<dbReference type="NCBIfam" id="NF002701">
    <property type="entry name" value="PRK02504.1"/>
    <property type="match status" value="1"/>
</dbReference>
<dbReference type="PANTHER" id="PTHR22773">
    <property type="entry name" value="NADH DEHYDROGENASE"/>
    <property type="match status" value="1"/>
</dbReference>
<dbReference type="Pfam" id="PF19530">
    <property type="entry name" value="Ndh2_N"/>
    <property type="match status" value="1"/>
</dbReference>
<dbReference type="Pfam" id="PF00361">
    <property type="entry name" value="Proton_antipo_M"/>
    <property type="match status" value="1"/>
</dbReference>
<dbReference type="PRINTS" id="PR01434">
    <property type="entry name" value="NADHDHGNASE5"/>
</dbReference>
<comment type="function">
    <text evidence="1">NDH shuttles electrons from NAD(P)H:plastoquinone, via FMN and iron-sulfur (Fe-S) centers, to quinones in the photosynthetic chain and possibly in a chloroplast respiratory chain. The immediate electron acceptor for the enzyme in this species is believed to be plastoquinone. Couples the redox reaction to proton translocation, and thus conserves the redox energy in a proton gradient.</text>
</comment>
<comment type="catalytic activity">
    <reaction evidence="1">
        <text>a plastoquinone + NADH + (n+1) H(+)(in) = a plastoquinol + NAD(+) + n H(+)(out)</text>
        <dbReference type="Rhea" id="RHEA:42608"/>
        <dbReference type="Rhea" id="RHEA-COMP:9561"/>
        <dbReference type="Rhea" id="RHEA-COMP:9562"/>
        <dbReference type="ChEBI" id="CHEBI:15378"/>
        <dbReference type="ChEBI" id="CHEBI:17757"/>
        <dbReference type="ChEBI" id="CHEBI:57540"/>
        <dbReference type="ChEBI" id="CHEBI:57945"/>
        <dbReference type="ChEBI" id="CHEBI:62192"/>
    </reaction>
</comment>
<comment type="catalytic activity">
    <reaction evidence="1">
        <text>a plastoquinone + NADPH + (n+1) H(+)(in) = a plastoquinol + NADP(+) + n H(+)(out)</text>
        <dbReference type="Rhea" id="RHEA:42612"/>
        <dbReference type="Rhea" id="RHEA-COMP:9561"/>
        <dbReference type="Rhea" id="RHEA-COMP:9562"/>
        <dbReference type="ChEBI" id="CHEBI:15378"/>
        <dbReference type="ChEBI" id="CHEBI:17757"/>
        <dbReference type="ChEBI" id="CHEBI:57783"/>
        <dbReference type="ChEBI" id="CHEBI:58349"/>
        <dbReference type="ChEBI" id="CHEBI:62192"/>
    </reaction>
</comment>
<comment type="subunit">
    <text evidence="1">NDH is composed of at least 16 different subunits, 5 of which are encoded in the nucleus.</text>
</comment>
<comment type="subcellular location">
    <subcellularLocation>
        <location evidence="1">Plastid</location>
        <location evidence="1">Chloroplast thylakoid membrane</location>
        <topology evidence="1">Multi-pass membrane protein</topology>
    </subcellularLocation>
</comment>
<comment type="similarity">
    <text evidence="1">Belongs to the complex I subunit 2 family.</text>
</comment>
<comment type="sequence caution" evidence="2">
    <conflict type="erroneous initiation">
        <sequence resource="EMBL-CDS" id="AAN31995"/>
    </conflict>
</comment>
<feature type="chain" id="PRO_0000225343" description="NAD(P)H-quinone oxidoreductase subunit 2, chloroplastic">
    <location>
        <begin position="1"/>
        <end position="510"/>
    </location>
</feature>
<feature type="transmembrane region" description="Helical" evidence="1">
    <location>
        <begin position="24"/>
        <end position="44"/>
    </location>
</feature>
<feature type="transmembrane region" description="Helical" evidence="1">
    <location>
        <begin position="59"/>
        <end position="79"/>
    </location>
</feature>
<feature type="transmembrane region" description="Helical" evidence="1">
    <location>
        <begin position="99"/>
        <end position="119"/>
    </location>
</feature>
<feature type="transmembrane region" description="Helical" evidence="1">
    <location>
        <begin position="124"/>
        <end position="144"/>
    </location>
</feature>
<feature type="transmembrane region" description="Helical" evidence="1">
    <location>
        <begin position="149"/>
        <end position="169"/>
    </location>
</feature>
<feature type="transmembrane region" description="Helical" evidence="1">
    <location>
        <begin position="183"/>
        <end position="203"/>
    </location>
</feature>
<feature type="transmembrane region" description="Helical" evidence="1">
    <location>
        <begin position="229"/>
        <end position="249"/>
    </location>
</feature>
<feature type="transmembrane region" description="Helical" evidence="1">
    <location>
        <begin position="295"/>
        <end position="315"/>
    </location>
</feature>
<feature type="transmembrane region" description="Helical" evidence="1">
    <location>
        <begin position="323"/>
        <end position="343"/>
    </location>
</feature>
<feature type="transmembrane region" description="Helical" evidence="1">
    <location>
        <begin position="354"/>
        <end position="374"/>
    </location>
</feature>
<feature type="transmembrane region" description="Helical" evidence="1">
    <location>
        <begin position="395"/>
        <end position="415"/>
    </location>
</feature>
<feature type="transmembrane region" description="Helical" evidence="1">
    <location>
        <begin position="418"/>
        <end position="438"/>
    </location>
</feature>
<proteinExistence type="inferred from homology"/>
<name>NU2C_ENSVE</name>
<protein>
    <recommendedName>
        <fullName evidence="1">NAD(P)H-quinone oxidoreductase subunit 2, chloroplastic</fullName>
        <ecNumber evidence="1">7.1.1.-</ecNumber>
    </recommendedName>
    <alternativeName>
        <fullName evidence="1">NAD(P)H dehydrogenase, subunit 2</fullName>
    </alternativeName>
    <alternativeName>
        <fullName evidence="1">NADH-plastoquinone oxidoreductase subunit 2</fullName>
    </alternativeName>
</protein>
<gene>
    <name evidence="1" type="primary">ndhB</name>
</gene>
<sequence length="510" mass="56734">MIWHVQNENFILDSTRIFMKAFHLLLFHGSFIFPECILIFGLILLLMIDSTSDQKDRPWFYFISSTSLIISITALLFRWREEPIISFSGNFQTNNFNEIFQFLILLCSTLCIPLSVEYIECTEMAITEFLLFVLTATLGGMFLCGANDLITIFVAPECFSLCSYLLSGYTKRDVRSNEATMKYLLMGGASSSILVHGFSWLYGSSGGEIELQEIVNGLINTQMYNSPGISIALISITVGIGFKLSPAPFHQWTPDVYEGSPTPVVAFLSVTSKVAASASATRIFDIPFYFSSNEWHLLLEILAILSMILGNLIAITQTSMKRMLAYSSIGQIGYVIIGIIVGDSNDGYASMITYMLFYISMNLGTFACIVLFGLRTGTDNIRDYAGLYTKDPFLALSSALCLLSLGGLPPLAGFFGKLHLFWCGWQAGLYFLVSIGLLTSVVSIYYYLKIIKLLMTGRNQEITPYVRNYRRSPLRSNNSIELSMTVCVIASTIPGISMNPILAIAQDTLF</sequence>